<sequence length="111" mass="12054">ATFSEAPPGNKDVGAKIFKTKCAQCHTVDLGAGHKQGPNLNGLFGRQSGTAASYSYSAANKNKAVIWSEDTLYEYLLNPKKYIPGTKMVFPGLKKPQDRADLIAYLKDSTQ</sequence>
<feature type="chain" id="PRO_0000108310" description="Cytochrome c">
    <location>
        <begin position="1"/>
        <end position="111"/>
    </location>
</feature>
<feature type="binding site" description="covalent" evidence="1 2">
    <location>
        <position position="22"/>
    </location>
    <ligand>
        <name>heme c</name>
        <dbReference type="ChEBI" id="CHEBI:61717"/>
    </ligand>
</feature>
<feature type="binding site" description="covalent" evidence="1 2">
    <location>
        <position position="25"/>
    </location>
    <ligand>
        <name>heme c</name>
        <dbReference type="ChEBI" id="CHEBI:61717"/>
    </ligand>
</feature>
<feature type="binding site" description="axial binding residue">
    <location>
        <position position="26"/>
    </location>
    <ligand>
        <name>heme c</name>
        <dbReference type="ChEBI" id="CHEBI:61717"/>
    </ligand>
    <ligandPart>
        <name>Fe</name>
        <dbReference type="ChEBI" id="CHEBI:18248"/>
    </ligandPart>
</feature>
<feature type="binding site" description="axial binding residue">
    <location>
        <position position="88"/>
    </location>
    <ligand>
        <name>heme c</name>
        <dbReference type="ChEBI" id="CHEBI:61717"/>
    </ligand>
    <ligandPart>
        <name>Fe</name>
        <dbReference type="ChEBI" id="CHEBI:18248"/>
    </ligandPart>
</feature>
<feature type="modified residue" description="N-acetylalanine" evidence="2">
    <location>
        <position position="1"/>
    </location>
</feature>
<feature type="modified residue" description="N6,N6,N6-trimethyllysine" evidence="2">
    <location>
        <position position="80"/>
    </location>
</feature>
<feature type="modified residue" description="N6,N6,N6-trimethyllysine" evidence="2">
    <location>
        <position position="94"/>
    </location>
</feature>
<dbReference type="PIR" id="A00065">
    <property type="entry name" value="CCSP"/>
</dbReference>
<dbReference type="SMR" id="P00073"/>
<dbReference type="iPTMnet" id="P00073"/>
<dbReference type="Proteomes" id="UP001155700">
    <property type="component" value="Unplaced"/>
</dbReference>
<dbReference type="GO" id="GO:0005758">
    <property type="term" value="C:mitochondrial intermembrane space"/>
    <property type="evidence" value="ECO:0000318"/>
    <property type="project" value="GO_Central"/>
</dbReference>
<dbReference type="GO" id="GO:0009055">
    <property type="term" value="F:electron transfer activity"/>
    <property type="evidence" value="ECO:0000318"/>
    <property type="project" value="GO_Central"/>
</dbReference>
<dbReference type="GO" id="GO:0020037">
    <property type="term" value="F:heme binding"/>
    <property type="evidence" value="ECO:0007669"/>
    <property type="project" value="InterPro"/>
</dbReference>
<dbReference type="GO" id="GO:0046872">
    <property type="term" value="F:metal ion binding"/>
    <property type="evidence" value="ECO:0007669"/>
    <property type="project" value="UniProtKB-KW"/>
</dbReference>
<dbReference type="GO" id="GO:0006123">
    <property type="term" value="P:mitochondrial electron transport, cytochrome c to oxygen"/>
    <property type="evidence" value="ECO:0000318"/>
    <property type="project" value="GO_Central"/>
</dbReference>
<dbReference type="GO" id="GO:0006122">
    <property type="term" value="P:mitochondrial electron transport, ubiquinol to cytochrome c"/>
    <property type="evidence" value="ECO:0000318"/>
    <property type="project" value="GO_Central"/>
</dbReference>
<dbReference type="FunFam" id="1.10.760.10:FF:000001">
    <property type="entry name" value="Cytochrome c iso-1"/>
    <property type="match status" value="1"/>
</dbReference>
<dbReference type="Gene3D" id="1.10.760.10">
    <property type="entry name" value="Cytochrome c-like domain"/>
    <property type="match status" value="1"/>
</dbReference>
<dbReference type="InterPro" id="IPR009056">
    <property type="entry name" value="Cyt_c-like_dom"/>
</dbReference>
<dbReference type="InterPro" id="IPR036909">
    <property type="entry name" value="Cyt_c-like_dom_sf"/>
</dbReference>
<dbReference type="InterPro" id="IPR002327">
    <property type="entry name" value="Cyt_c_1A/1B"/>
</dbReference>
<dbReference type="PANTHER" id="PTHR11961">
    <property type="entry name" value="CYTOCHROME C"/>
    <property type="match status" value="1"/>
</dbReference>
<dbReference type="Pfam" id="PF00034">
    <property type="entry name" value="Cytochrom_C"/>
    <property type="match status" value="1"/>
</dbReference>
<dbReference type="PRINTS" id="PR00604">
    <property type="entry name" value="CYTCHRMECIAB"/>
</dbReference>
<dbReference type="SUPFAM" id="SSF46626">
    <property type="entry name" value="Cytochrome c"/>
    <property type="match status" value="1"/>
</dbReference>
<dbReference type="PROSITE" id="PS51007">
    <property type="entry name" value="CYTC"/>
    <property type="match status" value="1"/>
</dbReference>
<comment type="function">
    <text>Electron carrier protein. The oxidized form of the cytochrome c heme group can accept an electron from the heme group of the cytochrome c1 subunit of cytochrome reductase. Cytochrome c then transfers this electron to the cytochrome oxidase complex, the final protein carrier in the mitochondrial electron-transport chain.</text>
</comment>
<comment type="subcellular location">
    <subcellularLocation>
        <location>Mitochondrion intermembrane space</location>
    </subcellularLocation>
    <text>Loosely associated with the inner membrane.</text>
</comment>
<comment type="PTM">
    <text>Binds 1 heme c group covalently per subunit.</text>
</comment>
<comment type="similarity">
    <text evidence="3">Belongs to the cytochrome c family.</text>
</comment>
<comment type="online information" name="Protein Spotlight">
    <link uri="https://www.proteinspotlight.org/back_issues/076"/>
    <text>Life shuttle - Issue 76 of November 2006</text>
</comment>
<proteinExistence type="evidence at protein level"/>
<evidence type="ECO:0000255" key="1">
    <source>
        <dbReference type="PROSITE-ProRule" id="PRU00433"/>
    </source>
</evidence>
<evidence type="ECO:0000269" key="2">
    <source>
    </source>
</evidence>
<evidence type="ECO:0000305" key="3"/>
<reference key="1">
    <citation type="journal article" date="1973" name="Biochem. J.">
        <title>The amino acid sequence of cytochrome c from Spinacea oleracea L. (spinach).</title>
        <authorList>
            <person name="Brown R.H."/>
            <person name="Richardson M."/>
            <person name="Scogin R."/>
            <person name="Boulter D."/>
        </authorList>
    </citation>
    <scope>PROTEIN SEQUENCE</scope>
    <scope>ACETYLATION AT ALA-1</scope>
    <scope>METHYLATION AT LYS-80 AND LYS-94</scope>
    <source>
        <strain>cv. Viroflay</strain>
    </source>
</reference>
<organism>
    <name type="scientific">Spinacia oleracea</name>
    <name type="common">Spinach</name>
    <dbReference type="NCBI Taxonomy" id="3562"/>
    <lineage>
        <taxon>Eukaryota</taxon>
        <taxon>Viridiplantae</taxon>
        <taxon>Streptophyta</taxon>
        <taxon>Embryophyta</taxon>
        <taxon>Tracheophyta</taxon>
        <taxon>Spermatophyta</taxon>
        <taxon>Magnoliopsida</taxon>
        <taxon>eudicotyledons</taxon>
        <taxon>Gunneridae</taxon>
        <taxon>Pentapetalae</taxon>
        <taxon>Caryophyllales</taxon>
        <taxon>Chenopodiaceae</taxon>
        <taxon>Chenopodioideae</taxon>
        <taxon>Anserineae</taxon>
        <taxon>Spinacia</taxon>
    </lineage>
</organism>
<accession>P00073</accession>
<protein>
    <recommendedName>
        <fullName>Cytochrome c</fullName>
    </recommendedName>
</protein>
<keyword id="KW-0007">Acetylation</keyword>
<keyword id="KW-0903">Direct protein sequencing</keyword>
<keyword id="KW-0249">Electron transport</keyword>
<keyword id="KW-0349">Heme</keyword>
<keyword id="KW-0408">Iron</keyword>
<keyword id="KW-0479">Metal-binding</keyword>
<keyword id="KW-0488">Methylation</keyword>
<keyword id="KW-0496">Mitochondrion</keyword>
<keyword id="KW-1185">Reference proteome</keyword>
<keyword id="KW-0679">Respiratory chain</keyword>
<keyword id="KW-0813">Transport</keyword>
<name>CYC_SPIOL</name>